<reference key="1">
    <citation type="journal article" date="1996" name="Yeast">
        <title>DNA sequence analysis of the VPH1-SNF2 region on chromosome XV of Saccharomyces cerevisiae.</title>
        <authorList>
            <person name="Cheret G."/>
            <person name="Bernardi A."/>
            <person name="Sor F.J."/>
        </authorList>
    </citation>
    <scope>NUCLEOTIDE SEQUENCE [GENOMIC DNA]</scope>
    <source>
        <strain>ATCC 96604 / S288c / FY1679</strain>
    </source>
</reference>
<reference key="2">
    <citation type="journal article" date="1997" name="Nature">
        <title>The nucleotide sequence of Saccharomyces cerevisiae chromosome XV.</title>
        <authorList>
            <person name="Dujon B."/>
            <person name="Albermann K."/>
            <person name="Aldea M."/>
            <person name="Alexandraki D."/>
            <person name="Ansorge W."/>
            <person name="Arino J."/>
            <person name="Benes V."/>
            <person name="Bohn C."/>
            <person name="Bolotin-Fukuhara M."/>
            <person name="Bordonne R."/>
            <person name="Boyer J."/>
            <person name="Camasses A."/>
            <person name="Casamayor A."/>
            <person name="Casas C."/>
            <person name="Cheret G."/>
            <person name="Cziepluch C."/>
            <person name="Daignan-Fornier B."/>
            <person name="Dang V.-D."/>
            <person name="de Haan M."/>
            <person name="Delius H."/>
            <person name="Durand P."/>
            <person name="Fairhead C."/>
            <person name="Feldmann H."/>
            <person name="Gaillon L."/>
            <person name="Galisson F."/>
            <person name="Gamo F.-J."/>
            <person name="Gancedo C."/>
            <person name="Goffeau A."/>
            <person name="Goulding S.E."/>
            <person name="Grivell L.A."/>
            <person name="Habbig B."/>
            <person name="Hand N.J."/>
            <person name="Hani J."/>
            <person name="Hattenhorst U."/>
            <person name="Hebling U."/>
            <person name="Hernando Y."/>
            <person name="Herrero E."/>
            <person name="Heumann K."/>
            <person name="Hiesel R."/>
            <person name="Hilger F."/>
            <person name="Hofmann B."/>
            <person name="Hollenberg C.P."/>
            <person name="Hughes B."/>
            <person name="Jauniaux J.-C."/>
            <person name="Kalogeropoulos A."/>
            <person name="Katsoulou C."/>
            <person name="Kordes E."/>
            <person name="Lafuente M.J."/>
            <person name="Landt O."/>
            <person name="Louis E.J."/>
            <person name="Maarse A.C."/>
            <person name="Madania A."/>
            <person name="Mannhaupt G."/>
            <person name="Marck C."/>
            <person name="Martin R.P."/>
            <person name="Mewes H.-W."/>
            <person name="Michaux G."/>
            <person name="Paces V."/>
            <person name="Parle-McDermott A.G."/>
            <person name="Pearson B.M."/>
            <person name="Perrin A."/>
            <person name="Pettersson B."/>
            <person name="Poch O."/>
            <person name="Pohl T.M."/>
            <person name="Poirey R."/>
            <person name="Portetelle D."/>
            <person name="Pujol A."/>
            <person name="Purnelle B."/>
            <person name="Ramezani Rad M."/>
            <person name="Rechmann S."/>
            <person name="Schwager C."/>
            <person name="Schweizer M."/>
            <person name="Sor F."/>
            <person name="Sterky F."/>
            <person name="Tarassov I.A."/>
            <person name="Teodoru C."/>
            <person name="Tettelin H."/>
            <person name="Thierry A."/>
            <person name="Tobiasch E."/>
            <person name="Tzermia M."/>
            <person name="Uhlen M."/>
            <person name="Unseld M."/>
            <person name="Valens M."/>
            <person name="Vandenbol M."/>
            <person name="Vetter I."/>
            <person name="Vlcek C."/>
            <person name="Voet M."/>
            <person name="Volckaert G."/>
            <person name="Voss H."/>
            <person name="Wambutt R."/>
            <person name="Wedler H."/>
            <person name="Wiemann S."/>
            <person name="Winsor B."/>
            <person name="Wolfe K.H."/>
            <person name="Zollner A."/>
            <person name="Zumstein E."/>
            <person name="Kleine K."/>
        </authorList>
    </citation>
    <scope>NUCLEOTIDE SEQUENCE [LARGE SCALE GENOMIC DNA]</scope>
    <source>
        <strain>ATCC 204508 / S288c</strain>
    </source>
</reference>
<reference key="3">
    <citation type="journal article" date="2014" name="G3 (Bethesda)">
        <title>The reference genome sequence of Saccharomyces cerevisiae: Then and now.</title>
        <authorList>
            <person name="Engel S.R."/>
            <person name="Dietrich F.S."/>
            <person name="Fisk D.G."/>
            <person name="Binkley G."/>
            <person name="Balakrishnan R."/>
            <person name="Costanzo M.C."/>
            <person name="Dwight S.S."/>
            <person name="Hitz B.C."/>
            <person name="Karra K."/>
            <person name="Nash R.S."/>
            <person name="Weng S."/>
            <person name="Wong E.D."/>
            <person name="Lloyd P."/>
            <person name="Skrzypek M.S."/>
            <person name="Miyasato S.R."/>
            <person name="Simison M."/>
            <person name="Cherry J.M."/>
        </authorList>
    </citation>
    <scope>GENOME REANNOTATION</scope>
    <source>
        <strain>ATCC 204508 / S288c</strain>
    </source>
</reference>
<reference key="4">
    <citation type="journal article" date="2003" name="Nature">
        <title>Global analysis of protein localization in budding yeast.</title>
        <authorList>
            <person name="Huh W.-K."/>
            <person name="Falvo J.V."/>
            <person name="Gerke L.C."/>
            <person name="Carroll A.S."/>
            <person name="Howson R.W."/>
            <person name="Weissman J.S."/>
            <person name="O'Shea E.K."/>
        </authorList>
    </citation>
    <scope>SUBCELLULAR LOCATION [LARGE SCALE ANALYSIS]</scope>
</reference>
<reference key="5">
    <citation type="journal article" date="2003" name="Nature">
        <title>Global analysis of protein expression in yeast.</title>
        <authorList>
            <person name="Ghaemmaghami S."/>
            <person name="Huh W.-K."/>
            <person name="Bower K."/>
            <person name="Howson R.W."/>
            <person name="Belle A."/>
            <person name="Dephoure N."/>
            <person name="O'Shea E.K."/>
            <person name="Weissman J.S."/>
        </authorList>
    </citation>
    <scope>LEVEL OF PROTEIN EXPRESSION [LARGE SCALE ANALYSIS]</scope>
</reference>
<reference key="6">
    <citation type="journal article" date="2003" name="Proc. Natl. Acad. Sci. U.S.A.">
        <title>The proteome of Saccharomyces cerevisiae mitochondria.</title>
        <authorList>
            <person name="Sickmann A."/>
            <person name="Reinders J."/>
            <person name="Wagner Y."/>
            <person name="Joppich C."/>
            <person name="Zahedi R.P."/>
            <person name="Meyer H.E."/>
            <person name="Schoenfisch B."/>
            <person name="Perschil I."/>
            <person name="Chacinska A."/>
            <person name="Guiard B."/>
            <person name="Rehling P."/>
            <person name="Pfanner N."/>
            <person name="Meisinger C."/>
        </authorList>
    </citation>
    <scope>SUBCELLULAR LOCATION [LARGE SCALE ANALYSIS]</scope>
    <source>
        <strain>ATCC 76625 / YPH499</strain>
    </source>
</reference>
<reference key="7">
    <citation type="journal article" date="2006" name="Mol. Biol. Cell">
        <title>Proteomic analysis of the yeast mitochondrial outer membrane reveals accumulation of a subclass of preproteins.</title>
        <authorList>
            <person name="Zahedi R.P."/>
            <person name="Sickmann A."/>
            <person name="Boehm A.M."/>
            <person name="Winkler C."/>
            <person name="Zufall N."/>
            <person name="Schoenfisch B."/>
            <person name="Guiard B."/>
            <person name="Pfanner N."/>
            <person name="Meisinger C."/>
        </authorList>
    </citation>
    <scope>SUBCELLULAR LOCATION</scope>
    <scope>IDENTIFICATION BY MASS SPECTROMETRY</scope>
</reference>
<reference key="8">
    <citation type="journal article" date="2009" name="Proc. Natl. Acad. Sci. U.S.A.">
        <title>A protein microarray-based analysis of S-nitrosylation.</title>
        <authorList>
            <person name="Foster M.W."/>
            <person name="Forrester M.T."/>
            <person name="Stamler J.S."/>
        </authorList>
    </citation>
    <scope>IDENTIFICATION</scope>
</reference>
<reference key="9">
    <citation type="journal article" date="2009" name="Science">
        <title>Global analysis of Cdk1 substrate phosphorylation sites provides insights into evolution.</title>
        <authorList>
            <person name="Holt L.J."/>
            <person name="Tuch B.B."/>
            <person name="Villen J."/>
            <person name="Johnson A.D."/>
            <person name="Gygi S.P."/>
            <person name="Morgan D.O."/>
        </authorList>
    </citation>
    <scope>PHOSPHORYLATION [LARGE SCALE ANALYSIS] AT SER-26</scope>
    <scope>IDENTIFICATION BY MASS SPECTROMETRY [LARGE SCALE ANALYSIS]</scope>
</reference>
<reference key="10">
    <citation type="journal article" date="2014" name="Biochemistry">
        <title>Biosynthesis of a central intermediate in hydrogen sulfide metabolism by a novel human sulfurtransferase and its yeast ortholog.</title>
        <authorList>
            <person name="Melideo S.L."/>
            <person name="Jackson M.R."/>
            <person name="Jorns M.S."/>
        </authorList>
    </citation>
    <scope>FUNCTION</scope>
    <scope>CATALYTIC ACTIVITY</scope>
    <scope>BIOPHYSICOCHEMICAL PROPERTIES</scope>
    <scope>MUTAGENESIS OF CYS-98</scope>
    <scope>ACTIVITY REGULATION</scope>
    <scope>ACTIVE SITE</scope>
</reference>
<reference key="11">
    <citation type="submission" date="2009-02" db="PDB data bank">
        <title>Atomic resolution structure of uncharacterized protein from saccharomyces cerevisiae.</title>
        <authorList>
            <consortium name="Midwest center for structural genomics (MCSG)"/>
        </authorList>
    </citation>
    <scope>X-RAY CRYSTALLOGRAPHY (0.98 ANGSTROMS)</scope>
</reference>
<keyword id="KW-0002">3D-structure</keyword>
<keyword id="KW-0496">Mitochondrion</keyword>
<keyword id="KW-0597">Phosphoprotein</keyword>
<keyword id="KW-1185">Reference proteome</keyword>
<keyword id="KW-0808">Transferase</keyword>
<feature type="chain" id="PRO_0000245269" description="Thiosulfate:glutathione sulfurtransferase">
    <location>
        <begin position="1"/>
        <end position="139"/>
    </location>
</feature>
<feature type="domain" description="Rhodanese" evidence="1">
    <location>
        <begin position="37"/>
        <end position="138"/>
    </location>
</feature>
<feature type="active site" description="Cysteine persulfide intermediate" evidence="1 6">
    <location>
        <position position="98"/>
    </location>
</feature>
<feature type="modified residue" description="Phosphoserine" evidence="8">
    <location>
        <position position="26"/>
    </location>
</feature>
<feature type="mutagenesis site" description="Leads to the loss of catalytic activity." evidence="6">
    <original>C</original>
    <variation>A</variation>
    <variation>S</variation>
    <location>
        <position position="98"/>
    </location>
</feature>
<feature type="helix" evidence="9">
    <location>
        <begin position="27"/>
        <end position="36"/>
    </location>
</feature>
<feature type="strand" evidence="9">
    <location>
        <begin position="41"/>
        <end position="45"/>
    </location>
</feature>
<feature type="helix" evidence="9">
    <location>
        <begin position="49"/>
        <end position="54"/>
    </location>
</feature>
<feature type="turn" evidence="9">
    <location>
        <begin position="65"/>
        <end position="67"/>
    </location>
</feature>
<feature type="helix" evidence="9">
    <location>
        <begin position="71"/>
        <end position="73"/>
    </location>
</feature>
<feature type="helix" evidence="9">
    <location>
        <begin position="76"/>
        <end position="83"/>
    </location>
</feature>
<feature type="strand" evidence="9">
    <location>
        <begin position="92"/>
        <end position="97"/>
    </location>
</feature>
<feature type="strand" evidence="9">
    <location>
        <begin position="99"/>
        <end position="101"/>
    </location>
</feature>
<feature type="helix" evidence="9">
    <location>
        <begin position="102"/>
        <end position="112"/>
    </location>
</feature>
<feature type="turn" evidence="9">
    <location>
        <begin position="113"/>
        <end position="115"/>
    </location>
</feature>
<feature type="strand" evidence="9">
    <location>
        <begin position="118"/>
        <end position="121"/>
    </location>
</feature>
<feature type="helix" evidence="9">
    <location>
        <begin position="125"/>
        <end position="131"/>
    </location>
</feature>
<feature type="helix" evidence="9">
    <location>
        <begin position="134"/>
        <end position="136"/>
    </location>
</feature>
<evidence type="ECO:0000255" key="1">
    <source>
        <dbReference type="PROSITE-ProRule" id="PRU00173"/>
    </source>
</evidence>
<evidence type="ECO:0000269" key="2">
    <source>
    </source>
</evidence>
<evidence type="ECO:0000269" key="3">
    <source>
    </source>
</evidence>
<evidence type="ECO:0000269" key="4">
    <source>
    </source>
</evidence>
<evidence type="ECO:0000269" key="5">
    <source>
    </source>
</evidence>
<evidence type="ECO:0000269" key="6">
    <source>
    </source>
</evidence>
<evidence type="ECO:0000303" key="7">
    <source>
    </source>
</evidence>
<evidence type="ECO:0007744" key="8">
    <source>
    </source>
</evidence>
<evidence type="ECO:0007829" key="9">
    <source>
        <dbReference type="PDB" id="3D1P"/>
    </source>
</evidence>
<gene>
    <name type="primary">RDL1</name>
    <name type="ordered locus">YOR285W</name>
</gene>
<proteinExistence type="evidence at protein level"/>
<name>RDL1_YEAST</name>
<comment type="function">
    <text evidence="6">Thiosulfate:glutathione sulfurtransferase (TST) required to produce S-sulfanylglutathione (GSS(-)), a central intermediate in hydrogen sulfide metabolism (PubMed:24981631). Provides the link between the first step in H(2)S metabolism performed by the sulfide:quinone oxidoreductase (SQOR) which catalyzes the conversion of H(2)S to thiosulfate, and the sulfur dioxygenase (SDO) which uses GSS(-) as substrate (PubMed:24981631). The thermodynamic coupling of the irreversible SDO and reversible TST reactions provides a model for the physiologically relevant reaction with thiosulfate as the sulfane donor (PubMed:24981631).</text>
</comment>
<comment type="catalytic activity">
    <reaction evidence="6">
        <text>thiosulfate + glutathione = S-sulfanylglutathione + sulfite + H(+)</text>
        <dbReference type="Rhea" id="RHEA:55976"/>
        <dbReference type="ChEBI" id="CHEBI:15378"/>
        <dbReference type="ChEBI" id="CHEBI:17359"/>
        <dbReference type="ChEBI" id="CHEBI:33542"/>
        <dbReference type="ChEBI" id="CHEBI:57925"/>
        <dbReference type="ChEBI" id="CHEBI:58905"/>
    </reaction>
</comment>
<comment type="activity regulation">
    <text evidence="6">GSS(-) is a potent inhibitor of RDL1, since the presence of the sulfur dioxygenase strongly increases the RDL1 catalytic activity (PubMed:24981631).</text>
</comment>
<comment type="biophysicochemical properties">
    <kinetics>
        <KM evidence="6">4.6 mM for glutathione</KM>
        <KM evidence="6">2 mM for thiosulfate</KM>
        <KM evidence="6">0.2 mM for glutathione (in the presence of sulfur dioxygenase)</KM>
        <KM evidence="6">7.6 mM for thiosulfate (in the presence of sulfur dioxygenase)</KM>
        <KM evidence="6">3.1 mM for thiosulfate (when glutathione is the acceptor)</KM>
        <KM evidence="6">5.5 mM for thiosulfate (when cystein is the acceptor)</KM>
        <KM evidence="6">4.3 mM for thiosulfate (when coenzyme A is the acceptor)</KM>
        <KM evidence="6">3.1 mM for thiosulfate (when DTT is the acceptor)</KM>
        <KM evidence="6">4 mM for thiosulfate (when cyanide is the acceptor)</KM>
        <KM evidence="6">5.6 mM for glutathione (when thiosulfate is the acceptor)</KM>
        <KM evidence="6">2.9 mM for cystein (when thiosulfate is the acceptor)</KM>
        <KM evidence="6">0.15 mM for coenzyme A (when thiosulfate is the acceptor)</KM>
        <KM evidence="6">0.16 mM for DTT (when thiosulfate is the acceptor)</KM>
        <KM evidence="6">2.6 mM for cyanide (when thiosulfate is the acceptor)</KM>
    </kinetics>
</comment>
<comment type="subcellular location">
    <subcellularLocation>
        <location evidence="2 4 5">Mitochondrion</location>
    </subcellularLocation>
</comment>
<comment type="miscellaneous">
    <text evidence="3">Present with 7470 molecules/cell in log phase SD medium.</text>
</comment>
<organism>
    <name type="scientific">Saccharomyces cerevisiae (strain ATCC 204508 / S288c)</name>
    <name type="common">Baker's yeast</name>
    <dbReference type="NCBI Taxonomy" id="559292"/>
    <lineage>
        <taxon>Eukaryota</taxon>
        <taxon>Fungi</taxon>
        <taxon>Dikarya</taxon>
        <taxon>Ascomycota</taxon>
        <taxon>Saccharomycotina</taxon>
        <taxon>Saccharomycetes</taxon>
        <taxon>Saccharomycetales</taxon>
        <taxon>Saccharomycetaceae</taxon>
        <taxon>Saccharomyces</taxon>
    </lineage>
</organism>
<sequence>MWKAVMNAWNGTESQSKNVSNIQSYSFEDMKRIVGKHDPNVVLVDVREPSEYSIVHIPASINVPYRSHPDAFALDPLEFEKQIGIPKPDSAKELIFYCASGKRGGEAQKVASSHGYSNTSLYPGSMNDWVSHGGDKLDL</sequence>
<accession>Q12305</accession>
<accession>D6W2Y3</accession>
<protein>
    <recommendedName>
        <fullName evidence="7">Thiosulfate:glutathione sulfurtransferase</fullName>
        <shortName evidence="7">TST</shortName>
        <ecNumber evidence="6">2.8.1.-</ecNumber>
    </recommendedName>
    <alternativeName>
        <fullName>Rhodanese-like protein 1</fullName>
    </alternativeName>
</protein>
<dbReference type="EC" id="2.8.1.-" evidence="6"/>
<dbReference type="EMBL" id="X89633">
    <property type="protein sequence ID" value="CAA61789.1"/>
    <property type="molecule type" value="Genomic_DNA"/>
</dbReference>
<dbReference type="EMBL" id="Z75193">
    <property type="protein sequence ID" value="CAA99512.1"/>
    <property type="molecule type" value="Genomic_DNA"/>
</dbReference>
<dbReference type="EMBL" id="BK006948">
    <property type="protein sequence ID" value="DAA11049.1"/>
    <property type="molecule type" value="Genomic_DNA"/>
</dbReference>
<dbReference type="PIR" id="S67187">
    <property type="entry name" value="S67187"/>
</dbReference>
<dbReference type="RefSeq" id="NP_014928.1">
    <property type="nucleotide sequence ID" value="NM_001183704.1"/>
</dbReference>
<dbReference type="PDB" id="3D1P">
    <property type="method" value="X-ray"/>
    <property type="resolution" value="0.98 A"/>
    <property type="chains" value="A=1-139"/>
</dbReference>
<dbReference type="PDBsum" id="3D1P"/>
<dbReference type="SMR" id="Q12305"/>
<dbReference type="BioGRID" id="34672">
    <property type="interactions" value="148"/>
</dbReference>
<dbReference type="DIP" id="DIP-4086N"/>
<dbReference type="FunCoup" id="Q12305">
    <property type="interactions" value="595"/>
</dbReference>
<dbReference type="IntAct" id="Q12305">
    <property type="interactions" value="29"/>
</dbReference>
<dbReference type="STRING" id="4932.YOR285W"/>
<dbReference type="iPTMnet" id="Q12305"/>
<dbReference type="PaxDb" id="4932-YOR285W"/>
<dbReference type="PeptideAtlas" id="Q12305"/>
<dbReference type="TopDownProteomics" id="Q12305"/>
<dbReference type="DNASU" id="854459"/>
<dbReference type="EnsemblFungi" id="YOR285W_mRNA">
    <property type="protein sequence ID" value="YOR285W"/>
    <property type="gene ID" value="YOR285W"/>
</dbReference>
<dbReference type="GeneID" id="854459"/>
<dbReference type="KEGG" id="sce:YOR285W"/>
<dbReference type="AGR" id="SGD:S000005811"/>
<dbReference type="SGD" id="S000005811">
    <property type="gene designation" value="RDL1"/>
</dbReference>
<dbReference type="VEuPathDB" id="FungiDB:YOR285W"/>
<dbReference type="eggNOG" id="KOG1530">
    <property type="taxonomic scope" value="Eukaryota"/>
</dbReference>
<dbReference type="GeneTree" id="ENSGT00940000163155"/>
<dbReference type="HOGENOM" id="CLU_089574_0_2_1"/>
<dbReference type="InParanoid" id="Q12305"/>
<dbReference type="OMA" id="FFCQMGR"/>
<dbReference type="OrthoDB" id="566238at2759"/>
<dbReference type="BioCyc" id="MetaCyc:G3O-33771-MONOMER"/>
<dbReference type="BioCyc" id="YEAST:G3O-33771-MONOMER"/>
<dbReference type="BioGRID-ORCS" id="854459">
    <property type="hits" value="0 hits in 10 CRISPR screens"/>
</dbReference>
<dbReference type="EvolutionaryTrace" id="Q12305"/>
<dbReference type="PRO" id="PR:Q12305"/>
<dbReference type="Proteomes" id="UP000002311">
    <property type="component" value="Chromosome XV"/>
</dbReference>
<dbReference type="RNAct" id="Q12305">
    <property type="molecule type" value="protein"/>
</dbReference>
<dbReference type="GO" id="GO:0005783">
    <property type="term" value="C:endoplasmic reticulum"/>
    <property type="evidence" value="ECO:0007005"/>
    <property type="project" value="SGD"/>
</dbReference>
<dbReference type="GO" id="GO:0005741">
    <property type="term" value="C:mitochondrial outer membrane"/>
    <property type="evidence" value="ECO:0007005"/>
    <property type="project" value="SGD"/>
</dbReference>
<dbReference type="GO" id="GO:0005739">
    <property type="term" value="C:mitochondrion"/>
    <property type="evidence" value="ECO:0007005"/>
    <property type="project" value="SGD"/>
</dbReference>
<dbReference type="GO" id="GO:0004792">
    <property type="term" value="F:thiosulfate-cyanide sulfurtransferase activity"/>
    <property type="evidence" value="ECO:0000314"/>
    <property type="project" value="SGD"/>
</dbReference>
<dbReference type="GO" id="GO:0006790">
    <property type="term" value="P:sulfur compound metabolic process"/>
    <property type="evidence" value="ECO:0000314"/>
    <property type="project" value="SGD"/>
</dbReference>
<dbReference type="CDD" id="cd01519">
    <property type="entry name" value="RHOD_HSP67B2"/>
    <property type="match status" value="1"/>
</dbReference>
<dbReference type="FunFam" id="3.40.250.10:FF:000082">
    <property type="entry name" value="Thiosulfate:glutathione sulfurtransferase"/>
    <property type="match status" value="1"/>
</dbReference>
<dbReference type="Gene3D" id="3.40.250.10">
    <property type="entry name" value="Rhodanese-like domain"/>
    <property type="match status" value="1"/>
</dbReference>
<dbReference type="InterPro" id="IPR001763">
    <property type="entry name" value="Rhodanese-like_dom"/>
</dbReference>
<dbReference type="InterPro" id="IPR036873">
    <property type="entry name" value="Rhodanese-like_dom_sf"/>
</dbReference>
<dbReference type="PANTHER" id="PTHR44086">
    <property type="entry name" value="THIOSULFATE SULFURTRANSFERASE RDL2, MITOCHONDRIAL-RELATED"/>
    <property type="match status" value="1"/>
</dbReference>
<dbReference type="PANTHER" id="PTHR44086:SF10">
    <property type="entry name" value="THIOSULFATE SULFURTRANSFERASE_RHODANESE-LIKE DOMAIN-CONTAINING PROTEIN 3"/>
    <property type="match status" value="1"/>
</dbReference>
<dbReference type="Pfam" id="PF00581">
    <property type="entry name" value="Rhodanese"/>
    <property type="match status" value="1"/>
</dbReference>
<dbReference type="SMART" id="SM00450">
    <property type="entry name" value="RHOD"/>
    <property type="match status" value="1"/>
</dbReference>
<dbReference type="SUPFAM" id="SSF52821">
    <property type="entry name" value="Rhodanese/Cell cycle control phosphatase"/>
    <property type="match status" value="1"/>
</dbReference>
<dbReference type="PROSITE" id="PS50206">
    <property type="entry name" value="RHODANESE_3"/>
    <property type="match status" value="1"/>
</dbReference>